<evidence type="ECO:0000255" key="1">
    <source>
        <dbReference type="HAMAP-Rule" id="MF_00246"/>
    </source>
</evidence>
<feature type="chain" id="PRO_1000204495" description="Galactokinase">
    <location>
        <begin position="1"/>
        <end position="382"/>
    </location>
</feature>
<feature type="active site" description="Proton acceptor" evidence="1">
    <location>
        <position position="174"/>
    </location>
</feature>
<feature type="binding site" evidence="1">
    <location>
        <begin position="34"/>
        <end position="37"/>
    </location>
    <ligand>
        <name>substrate</name>
    </ligand>
</feature>
<feature type="binding site" evidence="1">
    <location>
        <begin position="124"/>
        <end position="130"/>
    </location>
    <ligand>
        <name>ATP</name>
        <dbReference type="ChEBI" id="CHEBI:30616"/>
    </ligand>
</feature>
<feature type="binding site" evidence="1">
    <location>
        <position position="130"/>
    </location>
    <ligand>
        <name>Mg(2+)</name>
        <dbReference type="ChEBI" id="CHEBI:18420"/>
    </ligand>
</feature>
<feature type="binding site" evidence="1">
    <location>
        <position position="162"/>
    </location>
    <ligand>
        <name>Mg(2+)</name>
        <dbReference type="ChEBI" id="CHEBI:18420"/>
    </ligand>
</feature>
<feature type="binding site" evidence="1">
    <location>
        <position position="223"/>
    </location>
    <ligand>
        <name>substrate</name>
    </ligand>
</feature>
<feature type="site" description="Transition state stabilizer" evidence="1">
    <location>
        <position position="28"/>
    </location>
</feature>
<accession>C4ZXS8</accession>
<organism>
    <name type="scientific">Escherichia coli (strain K12 / MC4100 / BW2952)</name>
    <dbReference type="NCBI Taxonomy" id="595496"/>
    <lineage>
        <taxon>Bacteria</taxon>
        <taxon>Pseudomonadati</taxon>
        <taxon>Pseudomonadota</taxon>
        <taxon>Gammaproteobacteria</taxon>
        <taxon>Enterobacterales</taxon>
        <taxon>Enterobacteriaceae</taxon>
        <taxon>Escherichia</taxon>
    </lineage>
</organism>
<sequence>MSLKEKTQSLFANAFGYPATHTIQAPGRVNLIGEHTDYNDGFVLPCAIDYQTVISCAPRDDRKVRVMAADYENQLDEFSLDAPIVAHENYQWANYVRGVVKHLQLRNNSFGGVDMVISGNVPQGAGLSSSASLEVAVGTVLQQLYHLPLDGAQIALNGQEAENQFVGCNCGIMDQLISALGKKDHALLIDCRSLGTKAVSMPKGVAVVIINSNFKRTLVGSEYNTRREQCETGARFFQQPALRDVTIEEFNAVAHELDPIVAKRVRHILTENARTVEAASALEQGDLKRMGELMAESHASMRDDFEITVPQIDTLVEIVKAVIGDKGGVRMTGGGFGGCIVALIPEELVPAVQQAVAEQYEAKTGIKETFYVCKPSQGAGQC</sequence>
<gene>
    <name evidence="1" type="primary">galK</name>
    <name type="ordered locus">BWG_0609</name>
</gene>
<dbReference type="EC" id="2.7.1.6" evidence="1"/>
<dbReference type="EMBL" id="CP001396">
    <property type="protein sequence ID" value="ACR63267.1"/>
    <property type="molecule type" value="Genomic_DNA"/>
</dbReference>
<dbReference type="RefSeq" id="WP_000053415.1">
    <property type="nucleotide sequence ID" value="NC_012759.1"/>
</dbReference>
<dbReference type="SMR" id="C4ZXS8"/>
<dbReference type="GeneID" id="75170756"/>
<dbReference type="KEGG" id="ebw:BWG_0609"/>
<dbReference type="HOGENOM" id="CLU_017814_2_1_6"/>
<dbReference type="UniPathway" id="UPA00214"/>
<dbReference type="GO" id="GO:0005829">
    <property type="term" value="C:cytosol"/>
    <property type="evidence" value="ECO:0007669"/>
    <property type="project" value="TreeGrafter"/>
</dbReference>
<dbReference type="GO" id="GO:0005524">
    <property type="term" value="F:ATP binding"/>
    <property type="evidence" value="ECO:0007669"/>
    <property type="project" value="UniProtKB-UniRule"/>
</dbReference>
<dbReference type="GO" id="GO:0004335">
    <property type="term" value="F:galactokinase activity"/>
    <property type="evidence" value="ECO:0007669"/>
    <property type="project" value="UniProtKB-UniRule"/>
</dbReference>
<dbReference type="GO" id="GO:0000287">
    <property type="term" value="F:magnesium ion binding"/>
    <property type="evidence" value="ECO:0007669"/>
    <property type="project" value="UniProtKB-UniRule"/>
</dbReference>
<dbReference type="GO" id="GO:0006012">
    <property type="term" value="P:galactose metabolic process"/>
    <property type="evidence" value="ECO:0007669"/>
    <property type="project" value="UniProtKB-UniRule"/>
</dbReference>
<dbReference type="FunFam" id="3.30.230.10:FF:000017">
    <property type="entry name" value="Galactokinase"/>
    <property type="match status" value="1"/>
</dbReference>
<dbReference type="FunFam" id="3.30.70.890:FF:000001">
    <property type="entry name" value="Galactokinase"/>
    <property type="match status" value="1"/>
</dbReference>
<dbReference type="Gene3D" id="3.30.230.10">
    <property type="match status" value="1"/>
</dbReference>
<dbReference type="Gene3D" id="3.30.70.890">
    <property type="entry name" value="GHMP kinase, C-terminal domain"/>
    <property type="match status" value="1"/>
</dbReference>
<dbReference type="HAMAP" id="MF_00246">
    <property type="entry name" value="Galactokinase"/>
    <property type="match status" value="1"/>
</dbReference>
<dbReference type="InterPro" id="IPR000705">
    <property type="entry name" value="Galactokinase"/>
</dbReference>
<dbReference type="InterPro" id="IPR022963">
    <property type="entry name" value="Galactokinase_bac"/>
</dbReference>
<dbReference type="InterPro" id="IPR019741">
    <property type="entry name" value="Galactokinase_CS"/>
</dbReference>
<dbReference type="InterPro" id="IPR019539">
    <property type="entry name" value="GalKase_N"/>
</dbReference>
<dbReference type="InterPro" id="IPR013750">
    <property type="entry name" value="GHMP_kinase_C_dom"/>
</dbReference>
<dbReference type="InterPro" id="IPR036554">
    <property type="entry name" value="GHMP_kinase_C_sf"/>
</dbReference>
<dbReference type="InterPro" id="IPR006204">
    <property type="entry name" value="GHMP_kinase_N_dom"/>
</dbReference>
<dbReference type="InterPro" id="IPR006203">
    <property type="entry name" value="GHMP_knse_ATP-bd_CS"/>
</dbReference>
<dbReference type="InterPro" id="IPR006206">
    <property type="entry name" value="Mevalonate/galactokinase"/>
</dbReference>
<dbReference type="InterPro" id="IPR020568">
    <property type="entry name" value="Ribosomal_Su5_D2-typ_SF"/>
</dbReference>
<dbReference type="InterPro" id="IPR014721">
    <property type="entry name" value="Ribsml_uS5_D2-typ_fold_subgr"/>
</dbReference>
<dbReference type="NCBIfam" id="TIGR00131">
    <property type="entry name" value="gal_kin"/>
    <property type="match status" value="1"/>
</dbReference>
<dbReference type="NCBIfam" id="NF003472">
    <property type="entry name" value="PRK05101.1"/>
    <property type="match status" value="1"/>
</dbReference>
<dbReference type="PANTHER" id="PTHR10457:SF7">
    <property type="entry name" value="GALACTOKINASE-RELATED"/>
    <property type="match status" value="1"/>
</dbReference>
<dbReference type="PANTHER" id="PTHR10457">
    <property type="entry name" value="MEVALONATE KINASE/GALACTOKINASE"/>
    <property type="match status" value="1"/>
</dbReference>
<dbReference type="Pfam" id="PF10509">
    <property type="entry name" value="GalKase_gal_bdg"/>
    <property type="match status" value="1"/>
</dbReference>
<dbReference type="Pfam" id="PF08544">
    <property type="entry name" value="GHMP_kinases_C"/>
    <property type="match status" value="1"/>
</dbReference>
<dbReference type="Pfam" id="PF00288">
    <property type="entry name" value="GHMP_kinases_N"/>
    <property type="match status" value="1"/>
</dbReference>
<dbReference type="PIRSF" id="PIRSF000530">
    <property type="entry name" value="Galactokinase"/>
    <property type="match status" value="1"/>
</dbReference>
<dbReference type="PRINTS" id="PR00473">
    <property type="entry name" value="GALCTOKINASE"/>
</dbReference>
<dbReference type="PRINTS" id="PR00959">
    <property type="entry name" value="MEVGALKINASE"/>
</dbReference>
<dbReference type="SUPFAM" id="SSF55060">
    <property type="entry name" value="GHMP Kinase, C-terminal domain"/>
    <property type="match status" value="1"/>
</dbReference>
<dbReference type="SUPFAM" id="SSF54211">
    <property type="entry name" value="Ribosomal protein S5 domain 2-like"/>
    <property type="match status" value="1"/>
</dbReference>
<dbReference type="PROSITE" id="PS00106">
    <property type="entry name" value="GALACTOKINASE"/>
    <property type="match status" value="1"/>
</dbReference>
<dbReference type="PROSITE" id="PS00627">
    <property type="entry name" value="GHMP_KINASES_ATP"/>
    <property type="match status" value="1"/>
</dbReference>
<reference key="1">
    <citation type="journal article" date="2009" name="J. Bacteriol.">
        <title>Genomic sequencing reveals regulatory mutations and recombinational events in the widely used MC4100 lineage of Escherichia coli K-12.</title>
        <authorList>
            <person name="Ferenci T."/>
            <person name="Zhou Z."/>
            <person name="Betteridge T."/>
            <person name="Ren Y."/>
            <person name="Liu Y."/>
            <person name="Feng L."/>
            <person name="Reeves P.R."/>
            <person name="Wang L."/>
        </authorList>
    </citation>
    <scope>NUCLEOTIDE SEQUENCE [LARGE SCALE GENOMIC DNA]</scope>
    <source>
        <strain>K12 / MC4100 / BW2952</strain>
    </source>
</reference>
<proteinExistence type="inferred from homology"/>
<protein>
    <recommendedName>
        <fullName evidence="1">Galactokinase</fullName>
        <ecNumber evidence="1">2.7.1.6</ecNumber>
    </recommendedName>
    <alternativeName>
        <fullName evidence="1">Galactose kinase</fullName>
    </alternativeName>
</protein>
<comment type="function">
    <text evidence="1">Catalyzes the transfer of the gamma-phosphate of ATP to D-galactose to form alpha-D-galactose-1-phosphate (Gal-1-P).</text>
</comment>
<comment type="catalytic activity">
    <reaction evidence="1">
        <text>alpha-D-galactose + ATP = alpha-D-galactose 1-phosphate + ADP + H(+)</text>
        <dbReference type="Rhea" id="RHEA:13553"/>
        <dbReference type="ChEBI" id="CHEBI:15378"/>
        <dbReference type="ChEBI" id="CHEBI:28061"/>
        <dbReference type="ChEBI" id="CHEBI:30616"/>
        <dbReference type="ChEBI" id="CHEBI:58336"/>
        <dbReference type="ChEBI" id="CHEBI:456216"/>
        <dbReference type="EC" id="2.7.1.6"/>
    </reaction>
</comment>
<comment type="pathway">
    <text evidence="1">Carbohydrate metabolism; galactose metabolism.</text>
</comment>
<comment type="subcellular location">
    <subcellularLocation>
        <location evidence="1">Cytoplasm</location>
    </subcellularLocation>
</comment>
<comment type="similarity">
    <text evidence="1">Belongs to the GHMP kinase family. GalK subfamily.</text>
</comment>
<keyword id="KW-0067">ATP-binding</keyword>
<keyword id="KW-0119">Carbohydrate metabolism</keyword>
<keyword id="KW-0963">Cytoplasm</keyword>
<keyword id="KW-0299">Galactose metabolism</keyword>
<keyword id="KW-0418">Kinase</keyword>
<keyword id="KW-0460">Magnesium</keyword>
<keyword id="KW-0479">Metal-binding</keyword>
<keyword id="KW-0547">Nucleotide-binding</keyword>
<keyword id="KW-0808">Transferase</keyword>
<name>GAL1_ECOBW</name>